<dbReference type="EMBL" id="CP000926">
    <property type="protein sequence ID" value="ABY96678.1"/>
    <property type="molecule type" value="Genomic_DNA"/>
</dbReference>
<dbReference type="RefSeq" id="WP_012270479.1">
    <property type="nucleotide sequence ID" value="NC_010322.1"/>
</dbReference>
<dbReference type="SMR" id="B0KND8"/>
<dbReference type="KEGG" id="ppg:PputGB1_0768"/>
<dbReference type="eggNOG" id="COG3017">
    <property type="taxonomic scope" value="Bacteria"/>
</dbReference>
<dbReference type="HOGENOM" id="CLU_092816_2_1_6"/>
<dbReference type="Proteomes" id="UP000002157">
    <property type="component" value="Chromosome"/>
</dbReference>
<dbReference type="GO" id="GO:0009279">
    <property type="term" value="C:cell outer membrane"/>
    <property type="evidence" value="ECO:0007669"/>
    <property type="project" value="UniProtKB-SubCell"/>
</dbReference>
<dbReference type="GO" id="GO:0044874">
    <property type="term" value="P:lipoprotein localization to outer membrane"/>
    <property type="evidence" value="ECO:0007669"/>
    <property type="project" value="UniProtKB-UniRule"/>
</dbReference>
<dbReference type="GO" id="GO:0015031">
    <property type="term" value="P:protein transport"/>
    <property type="evidence" value="ECO:0007669"/>
    <property type="project" value="UniProtKB-KW"/>
</dbReference>
<dbReference type="CDD" id="cd16326">
    <property type="entry name" value="LolB"/>
    <property type="match status" value="1"/>
</dbReference>
<dbReference type="Gene3D" id="2.50.20.10">
    <property type="entry name" value="Lipoprotein localisation LolA/LolB/LppX"/>
    <property type="match status" value="1"/>
</dbReference>
<dbReference type="HAMAP" id="MF_00233">
    <property type="entry name" value="LolB"/>
    <property type="match status" value="1"/>
</dbReference>
<dbReference type="InterPro" id="IPR029046">
    <property type="entry name" value="LolA/LolB/LppX"/>
</dbReference>
<dbReference type="InterPro" id="IPR004565">
    <property type="entry name" value="OM_lipoprot_LolB"/>
</dbReference>
<dbReference type="NCBIfam" id="TIGR00548">
    <property type="entry name" value="lolB"/>
    <property type="match status" value="1"/>
</dbReference>
<dbReference type="Pfam" id="PF03550">
    <property type="entry name" value="LolB"/>
    <property type="match status" value="1"/>
</dbReference>
<dbReference type="SUPFAM" id="SSF89392">
    <property type="entry name" value="Prokaryotic lipoproteins and lipoprotein localization factors"/>
    <property type="match status" value="1"/>
</dbReference>
<dbReference type="PROSITE" id="PS51257">
    <property type="entry name" value="PROKAR_LIPOPROTEIN"/>
    <property type="match status" value="1"/>
</dbReference>
<sequence length="205" mass="22953">MFLRHCITFTLIALLAGCAGFGSREALQGHGDPQQWRAHKEQLSSLDGWQINGKVGIRAPRDSGSGTLFWLQRQDYYDIRLAGPLGRGAARLTGRPGGVVLEVANQGRYEATSPEALLEEQLGWQLPVSHLVWWVRGLPAPDSKSKLTLDGDSRLASLDQDGWQVQYLSYTEQNGYWLPERLKLHGKDLDVTLVVKDWQPRQLGH</sequence>
<name>LOLB_PSEPG</name>
<comment type="function">
    <text evidence="1">Plays a critical role in the incorporation of lipoproteins in the outer membrane after they are released by the LolA protein.</text>
</comment>
<comment type="subunit">
    <text evidence="1">Monomer.</text>
</comment>
<comment type="subcellular location">
    <subcellularLocation>
        <location evidence="1">Cell outer membrane</location>
        <topology evidence="1">Lipid-anchor</topology>
    </subcellularLocation>
</comment>
<comment type="similarity">
    <text evidence="1">Belongs to the LolB family.</text>
</comment>
<accession>B0KND8</accession>
<organism>
    <name type="scientific">Pseudomonas putida (strain GB-1)</name>
    <dbReference type="NCBI Taxonomy" id="76869"/>
    <lineage>
        <taxon>Bacteria</taxon>
        <taxon>Pseudomonadati</taxon>
        <taxon>Pseudomonadota</taxon>
        <taxon>Gammaproteobacteria</taxon>
        <taxon>Pseudomonadales</taxon>
        <taxon>Pseudomonadaceae</taxon>
        <taxon>Pseudomonas</taxon>
    </lineage>
</organism>
<feature type="signal peptide" evidence="1">
    <location>
        <begin position="1"/>
        <end position="17"/>
    </location>
</feature>
<feature type="chain" id="PRO_1000078255" description="Outer-membrane lipoprotein LolB">
    <location>
        <begin position="18"/>
        <end position="205"/>
    </location>
</feature>
<feature type="lipid moiety-binding region" description="N-palmitoyl cysteine" evidence="1">
    <location>
        <position position="18"/>
    </location>
</feature>
<feature type="lipid moiety-binding region" description="S-diacylglycerol cysteine" evidence="1">
    <location>
        <position position="18"/>
    </location>
</feature>
<keyword id="KW-0998">Cell outer membrane</keyword>
<keyword id="KW-0143">Chaperone</keyword>
<keyword id="KW-0449">Lipoprotein</keyword>
<keyword id="KW-0472">Membrane</keyword>
<keyword id="KW-0564">Palmitate</keyword>
<keyword id="KW-0653">Protein transport</keyword>
<keyword id="KW-0732">Signal</keyword>
<keyword id="KW-0813">Transport</keyword>
<proteinExistence type="inferred from homology"/>
<protein>
    <recommendedName>
        <fullName evidence="1">Outer-membrane lipoprotein LolB</fullName>
    </recommendedName>
</protein>
<reference key="1">
    <citation type="submission" date="2008-01" db="EMBL/GenBank/DDBJ databases">
        <title>Complete sequence of Pseudomonas putida GB-1.</title>
        <authorList>
            <consortium name="US DOE Joint Genome Institute"/>
            <person name="Copeland A."/>
            <person name="Lucas S."/>
            <person name="Lapidus A."/>
            <person name="Barry K."/>
            <person name="Glavina del Rio T."/>
            <person name="Dalin E."/>
            <person name="Tice H."/>
            <person name="Pitluck S."/>
            <person name="Bruce D."/>
            <person name="Goodwin L."/>
            <person name="Chertkov O."/>
            <person name="Brettin T."/>
            <person name="Detter J.C."/>
            <person name="Han C."/>
            <person name="Kuske C.R."/>
            <person name="Schmutz J."/>
            <person name="Larimer F."/>
            <person name="Land M."/>
            <person name="Hauser L."/>
            <person name="Kyrpides N."/>
            <person name="Kim E."/>
            <person name="McCarthy J.K."/>
            <person name="Richardson P."/>
        </authorList>
    </citation>
    <scope>NUCLEOTIDE SEQUENCE [LARGE SCALE GENOMIC DNA]</scope>
    <source>
        <strain>GB-1</strain>
    </source>
</reference>
<gene>
    <name evidence="1" type="primary">lolB</name>
    <name type="ordered locus">PputGB1_0768</name>
</gene>
<evidence type="ECO:0000255" key="1">
    <source>
        <dbReference type="HAMAP-Rule" id="MF_00233"/>
    </source>
</evidence>